<evidence type="ECO:0000269" key="1">
    <source>
    </source>
</evidence>
<evidence type="ECO:0000269" key="2">
    <source>
    </source>
</evidence>
<evidence type="ECO:0000305" key="3"/>
<keyword id="KW-0131">Cell cycle</keyword>
<keyword id="KW-0132">Cell division</keyword>
<keyword id="KW-0159">Chromosome partition</keyword>
<keyword id="KW-0963">Cytoplasm</keyword>
<keyword id="KW-0378">Hydrolase</keyword>
<keyword id="KW-0539">Nucleus</keyword>
<keyword id="KW-0645">Protease</keyword>
<keyword id="KW-1185">Reference proteome</keyword>
<keyword id="KW-0788">Thiol protease</keyword>
<name>CUT1_SCHPO</name>
<gene>
    <name type="primary">cut1</name>
    <name type="ORF">SPCC5E4.04</name>
</gene>
<feature type="chain" id="PRO_0000205903" description="Separin">
    <location>
        <begin position="1"/>
        <end position="1828"/>
    </location>
</feature>
<feature type="domain" description="Peptidase C50">
    <location>
        <begin position="1647"/>
        <end position="1741"/>
    </location>
</feature>
<feature type="active site">
    <location>
        <position position="1730"/>
    </location>
</feature>
<feature type="mutagenesis site" description="Affects the formation of the pointed nucleus; when associated with V-1779." evidence="1">
    <original>D</original>
    <variation>A</variation>
    <location>
        <position position="1767"/>
    </location>
</feature>
<feature type="mutagenesis site" description="Affects the formation of the pointed nucleus; when associated with A-1767." evidence="1">
    <original>E</original>
    <variation>V</variation>
    <location>
        <position position="1779"/>
    </location>
</feature>
<feature type="mutagenesis site" description="In cut1-T693; reduced function; when transferred at 33 degrees Celsius." evidence="1 2">
    <original>A</original>
    <variation>T</variation>
    <location>
        <position position="1816"/>
    </location>
</feature>
<feature type="sequence conflict" description="In Ref. 1 and 2." evidence="3" ref="1 2">
    <original>LFVENALP</original>
    <variation>PLSKMLDR</variation>
    <location>
        <begin position="430"/>
        <end position="437"/>
    </location>
</feature>
<feature type="sequence conflict" description="In Ref. 1 and 2." evidence="3" ref="1 2">
    <original>T</original>
    <variation>S</variation>
    <location>
        <position position="1125"/>
    </location>
</feature>
<feature type="sequence conflict" description="In Ref. 1 and 2." evidence="3" ref="1 2">
    <original>N</original>
    <variation>Y</variation>
    <location>
        <position position="1131"/>
    </location>
</feature>
<comment type="function">
    <text evidence="1">Caspase-like protease, which plays a central role in the chromosome segregation by cleaving the rad21 subunit of the cohesin complex at the onset of anaphase. During most of the cell cycle, it is inactivated by securin/cut2 protein. It is also required for pointed nuclear formation.</text>
</comment>
<comment type="catalytic activity">
    <reaction>
        <text>All bonds known to be hydrolyzed by this endopeptidase have arginine in P1 and an acidic residue in P4. P6 is often occupied by an acidic residue or by a hydroxy-amino-acid residue, the phosphorylation of which enhances cleavage.</text>
        <dbReference type="EC" id="3.4.22.49"/>
    </reaction>
</comment>
<comment type="activity regulation">
    <text>It is inactivated via its interaction with cut2, which probably covers its active site. Cut2 degradation at anaphase, liberates it and triggers rad21 cleavage.</text>
</comment>
<comment type="subunit">
    <text evidence="2">Interacts with cut2. Interacts with rad21.</text>
</comment>
<comment type="subcellular location">
    <subcellularLocation>
        <location>Cytoplasm</location>
    </subcellularLocation>
    <subcellularLocation>
        <location>Nucleus</location>
    </subcellularLocation>
</comment>
<organism>
    <name type="scientific">Schizosaccharomyces pombe (strain 972 / ATCC 24843)</name>
    <name type="common">Fission yeast</name>
    <dbReference type="NCBI Taxonomy" id="284812"/>
    <lineage>
        <taxon>Eukaryota</taxon>
        <taxon>Fungi</taxon>
        <taxon>Dikarya</taxon>
        <taxon>Ascomycota</taxon>
        <taxon>Taphrinomycotina</taxon>
        <taxon>Schizosaccharomycetes</taxon>
        <taxon>Schizosaccharomycetales</taxon>
        <taxon>Schizosaccharomycetaceae</taxon>
        <taxon>Schizosaccharomyces</taxon>
    </lineage>
</organism>
<dbReference type="EC" id="3.4.22.49"/>
<dbReference type="EMBL" id="M36179">
    <property type="protein sequence ID" value="AAB06192.1"/>
    <property type="molecule type" value="Genomic_DNA"/>
</dbReference>
<dbReference type="EMBL" id="CU329672">
    <property type="protein sequence ID" value="CAA21959.1"/>
    <property type="molecule type" value="Genomic_DNA"/>
</dbReference>
<dbReference type="PIR" id="A35694">
    <property type="entry name" value="A35694"/>
</dbReference>
<dbReference type="PIR" id="T41455">
    <property type="entry name" value="T41455"/>
</dbReference>
<dbReference type="RefSeq" id="NP_587903.1">
    <property type="nucleotide sequence ID" value="NM_001022895.2"/>
</dbReference>
<dbReference type="SMR" id="P18296"/>
<dbReference type="BioGRID" id="276005">
    <property type="interactions" value="54"/>
</dbReference>
<dbReference type="DIP" id="DIP-84N"/>
<dbReference type="ELM" id="P18296"/>
<dbReference type="FunCoup" id="P18296">
    <property type="interactions" value="118"/>
</dbReference>
<dbReference type="STRING" id="284812.P18296"/>
<dbReference type="iPTMnet" id="P18296"/>
<dbReference type="PaxDb" id="4896-SPCC5E4.04.1"/>
<dbReference type="EnsemblFungi" id="SPCC5E4.04.1">
    <property type="protein sequence ID" value="SPCC5E4.04.1:pep"/>
    <property type="gene ID" value="SPCC5E4.04"/>
</dbReference>
<dbReference type="GeneID" id="2539442"/>
<dbReference type="KEGG" id="spo:2539442"/>
<dbReference type="PomBase" id="SPCC5E4.04">
    <property type="gene designation" value="cut1"/>
</dbReference>
<dbReference type="VEuPathDB" id="FungiDB:SPCC5E4.04"/>
<dbReference type="eggNOG" id="KOG1849">
    <property type="taxonomic scope" value="Eukaryota"/>
</dbReference>
<dbReference type="HOGENOM" id="CLU_237201_0_0_1"/>
<dbReference type="InParanoid" id="P18296"/>
<dbReference type="OMA" id="IYEHMGQ"/>
<dbReference type="PhylomeDB" id="P18296"/>
<dbReference type="BRENDA" id="3.4.22.49">
    <property type="organism ID" value="5613"/>
</dbReference>
<dbReference type="Reactome" id="R-SPO-2467813">
    <property type="pathway name" value="Separation of Sister Chromatids"/>
</dbReference>
<dbReference type="CD-CODE" id="576F0A76">
    <property type="entry name" value="Centrosome"/>
</dbReference>
<dbReference type="PRO" id="PR:P18296"/>
<dbReference type="Proteomes" id="UP000002485">
    <property type="component" value="Chromosome III"/>
</dbReference>
<dbReference type="GO" id="GO:0005737">
    <property type="term" value="C:cytoplasm"/>
    <property type="evidence" value="ECO:0000318"/>
    <property type="project" value="GO_Central"/>
</dbReference>
<dbReference type="GO" id="GO:0005829">
    <property type="term" value="C:cytosol"/>
    <property type="evidence" value="ECO:0007005"/>
    <property type="project" value="PomBase"/>
</dbReference>
<dbReference type="GO" id="GO:0072686">
    <property type="term" value="C:mitotic spindle"/>
    <property type="evidence" value="ECO:0000314"/>
    <property type="project" value="PomBase"/>
</dbReference>
<dbReference type="GO" id="GO:1990023">
    <property type="term" value="C:mitotic spindle midzone"/>
    <property type="evidence" value="ECO:0000314"/>
    <property type="project" value="PomBase"/>
</dbReference>
<dbReference type="GO" id="GO:0044732">
    <property type="term" value="C:mitotic spindle pole body"/>
    <property type="evidence" value="ECO:0000314"/>
    <property type="project" value="PomBase"/>
</dbReference>
<dbReference type="GO" id="GO:0005634">
    <property type="term" value="C:nucleus"/>
    <property type="evidence" value="ECO:0000314"/>
    <property type="project" value="PomBase"/>
</dbReference>
<dbReference type="GO" id="GO:1990520">
    <property type="term" value="C:separase-securin complex"/>
    <property type="evidence" value="ECO:0000314"/>
    <property type="project" value="PomBase"/>
</dbReference>
<dbReference type="GO" id="GO:0004197">
    <property type="term" value="F:cysteine-type endopeptidase activity"/>
    <property type="evidence" value="ECO:0000318"/>
    <property type="project" value="GO_Central"/>
</dbReference>
<dbReference type="GO" id="GO:0004175">
    <property type="term" value="F:endopeptidase activity"/>
    <property type="evidence" value="ECO:0000315"/>
    <property type="project" value="PomBase"/>
</dbReference>
<dbReference type="GO" id="GO:0051301">
    <property type="term" value="P:cell division"/>
    <property type="evidence" value="ECO:0007669"/>
    <property type="project" value="UniProtKB-KW"/>
</dbReference>
<dbReference type="GO" id="GO:0006974">
    <property type="term" value="P:DNA damage response"/>
    <property type="evidence" value="ECO:0000315"/>
    <property type="project" value="PomBase"/>
</dbReference>
<dbReference type="GO" id="GO:0051307">
    <property type="term" value="P:meiotic chromosome separation"/>
    <property type="evidence" value="ECO:0000315"/>
    <property type="project" value="PomBase"/>
</dbReference>
<dbReference type="GO" id="GO:0140013">
    <property type="term" value="P:meiotic nuclear division"/>
    <property type="evidence" value="ECO:0000315"/>
    <property type="project" value="PomBase"/>
</dbReference>
<dbReference type="GO" id="GO:0051306">
    <property type="term" value="P:mitotic sister chromatid separation"/>
    <property type="evidence" value="ECO:0000315"/>
    <property type="project" value="PomBase"/>
</dbReference>
<dbReference type="GO" id="GO:0006508">
    <property type="term" value="P:proteolysis"/>
    <property type="evidence" value="ECO:0007669"/>
    <property type="project" value="UniProtKB-KW"/>
</dbReference>
<dbReference type="InterPro" id="IPR005314">
    <property type="entry name" value="Peptidase_C50"/>
</dbReference>
<dbReference type="InterPro" id="IPR030397">
    <property type="entry name" value="SEPARIN_core_dom"/>
</dbReference>
<dbReference type="PANTHER" id="PTHR12792">
    <property type="entry name" value="EXTRA SPINDLE POLES 1-RELATED"/>
    <property type="match status" value="1"/>
</dbReference>
<dbReference type="PANTHER" id="PTHR12792:SF0">
    <property type="entry name" value="SEPARIN"/>
    <property type="match status" value="1"/>
</dbReference>
<dbReference type="Pfam" id="PF03568">
    <property type="entry name" value="Peptidase_C50"/>
    <property type="match status" value="1"/>
</dbReference>
<dbReference type="PROSITE" id="PS51700">
    <property type="entry name" value="SEPARIN"/>
    <property type="match status" value="1"/>
</dbReference>
<sequence>MSTRSIVTSKVSWTPEKFISALSYPEHCSITLVKRLKASVKLKDLKQNISRDAPSWTFEHLFVAFKCAVSNLAKQWAELSTTDKEKTRRMFCTPSRLNTAHRPEVFYLLECCTYILEQMQVVTKNTSHLYDCIRSGVSICNRLLDMEIFEPAISLLMKTHKNLIILLTYRDHDAIPTATLLNPTLDVSEIQLESCLFVPMVPASYFLNIGTIVVTFQLNVLRCLSLSQINGLSLNTINNLQSEDGPFQWIERSFPSQVQLANSRREILARLLTRFSMIQNNALQSFKLLILSIALWLNILSSQRADDKEFDVNQLETRILQLFSKVVQLCKSEDIEGSILNKDMTQLHHLLENLSKESRLHILLQLSQLYYKYNDFQLSAAYVIRGYSLSFEDISFKLKFLLFSFRLSIHDNSICFPFNLIQELSSLQQLFVENALPYSEALHLLDSIERSFRLFNDSTVFDDTVFALNISEILSWILSSVVRDILVEDELLNLQLKIRKFLMFTFHIIRSFSELTKFQSSLEGCLNLAAYYEDAEFPQKLSNHLYNLCVKSSNVNYARECISLSIKIAVSHKLTNDETYLLKILKNFQLRYHDSLQLQEKCDVLHTTFNQLDLYVGTTSVGKSSVLDNILKRIFNSLTSINDSNIEKLLESISYSLLKLFFKCANEGSRYNASAALSFKLSLMLHEKEEVLLLKTNVSCVLANHGYNDIKFEEMVLCVIKGDQNLLEHNSNNNAKLALNESLLCSWENLLCYRRAEDDSRILTIIESWTIFISRFSSVISRCSFTDFEINSILNFFFCFLHTVEPSGKLTFELAFLEIFYELFNCLLHLQFSKYLVIIGTLLSDKYMTLGFSGKAHLFYTKCYSYLRQCKSSPFINFWNVSYGKYLILTGNTDKGILQLKKYSLSSEEDFNSNGLSRTVSLNLLLYERIQLSDALFQLGYTTVSLGFIMQNLKVIKGLFSKSSKEHFNGGKYITWRLFAVSAHSNVCAARIYEHMGQAREAEFFYRQACSISEKMPFSCFSATFQLRLCSLLTRAGKLEKGEKILFDLTEAMKSTDTYHKLLWNYGAAEVCATKSELDGAICHYSECVKLLEIIKSEYYLFFNRNREKSLTKGIKRLSLSSQPTFVTESNTTEFDDWSILQNTAANLLRLISMFELKRGNLEIAKALMTDSTKCSIASFFNIVSANILKSKLIVCEADSTLFGDPVLRTLPDSVISLPGISHKFQKNQSKTKALGENTGFRKGSKRLDYLRERLKINLQNVRLSCEIIFSNAYERSSVCVCREVNELISYSTIMQSALTTIGETTDVDSSSASFFLEIPKALGFHRRREAQKFRNQHKELHFSSLEQILNSRLSIPDVRTFQDNFIDSLPSIWNVVSITINNSGEDLFISKIRKGHSPLIFRLPLQRHNSRDADEEILVFTKAQTELFRIISKSNQMAQNGKHYTRREDKETWWKERRHLDQCLQQLLENIEISWLGGFKGIFNPHKIDTSLFAKFSSQFQNIIAKNFNMDKKTPVPTLSPEILELFITLGKPGYEGYEQLLEDLIYFILDIFQFRGLHFAYDEIDTDQLSMDLQDALNAYFNNYVSEENRSHTVLVLDKSVHQFPWESLPCLNRQSVSRVPSLSILRDILSQSFVVNGEYVEVRKEAGSYILNPSLDLKHTQEMFEHKLVEGGWKGLIASQPSNRDFIKMLSGNDFFLYFGHGGGEQYTTSYDLATLKRCAVTILMGCSSGALYECGSFEPWGTPLDYLSAGCPTLVANLWDVTDKDIDRFSLKMLESWGLFENKAPFVNSTSICTAVSESRSCCHLRYLNGAAPVIYGIPAYIIP</sequence>
<proteinExistence type="evidence at protein level"/>
<protein>
    <recommendedName>
        <fullName>Separin</fullName>
        <ecNumber>3.4.22.49</ecNumber>
    </recommendedName>
    <alternativeName>
        <fullName>Cell untimely torn protein 1</fullName>
    </alternativeName>
    <alternativeName>
        <fullName>Separase</fullName>
    </alternativeName>
</protein>
<reference key="1">
    <citation type="journal article" date="1990" name="Cell">
        <title>The fission yeast cut1+ gene regulates spindle pole body duplication and has homology to the budding yeast ESP1 gene.</title>
        <authorList>
            <person name="Uzawa S."/>
            <person name="Samejima I."/>
            <person name="Hirano T."/>
            <person name="Tanaka K."/>
            <person name="Yanagida M."/>
        </authorList>
    </citation>
    <scope>NUCLEOTIDE SEQUENCE [GENOMIC DNA]</scope>
    <source>
        <strain>972 / ATCC 24843</strain>
    </source>
</reference>
<reference key="2">
    <citation type="journal article" date="1996" name="EMBO J.">
        <title>Fission yeast Cut1 and Cut2 are essential for sister chromatid separation, concentrate along the metaphase spindle and form large complexes.</title>
        <authorList>
            <person name="Funabiki H."/>
            <person name="Kumada K."/>
            <person name="Yanagida M."/>
        </authorList>
    </citation>
    <scope>SEQUENCE REVISION</scope>
    <scope>INTERACTION WITH CUT2</scope>
    <scope>MUTAGENESIS OF ALA-1816</scope>
    <source>
        <strain>972 / ATCC 24843</strain>
    </source>
</reference>
<reference key="3">
    <citation type="journal article" date="2002" name="Nature">
        <title>The genome sequence of Schizosaccharomyces pombe.</title>
        <authorList>
            <person name="Wood V."/>
            <person name="Gwilliam R."/>
            <person name="Rajandream M.A."/>
            <person name="Lyne M.H."/>
            <person name="Lyne R."/>
            <person name="Stewart A."/>
            <person name="Sgouros J.G."/>
            <person name="Peat N."/>
            <person name="Hayles J."/>
            <person name="Baker S.G."/>
            <person name="Basham D."/>
            <person name="Bowman S."/>
            <person name="Brooks K."/>
            <person name="Brown D."/>
            <person name="Brown S."/>
            <person name="Chillingworth T."/>
            <person name="Churcher C.M."/>
            <person name="Collins M."/>
            <person name="Connor R."/>
            <person name="Cronin A."/>
            <person name="Davis P."/>
            <person name="Feltwell T."/>
            <person name="Fraser A."/>
            <person name="Gentles S."/>
            <person name="Goble A."/>
            <person name="Hamlin N."/>
            <person name="Harris D.E."/>
            <person name="Hidalgo J."/>
            <person name="Hodgson G."/>
            <person name="Holroyd S."/>
            <person name="Hornsby T."/>
            <person name="Howarth S."/>
            <person name="Huckle E.J."/>
            <person name="Hunt S."/>
            <person name="Jagels K."/>
            <person name="James K.D."/>
            <person name="Jones L."/>
            <person name="Jones M."/>
            <person name="Leather S."/>
            <person name="McDonald S."/>
            <person name="McLean J."/>
            <person name="Mooney P."/>
            <person name="Moule S."/>
            <person name="Mungall K.L."/>
            <person name="Murphy L.D."/>
            <person name="Niblett D."/>
            <person name="Odell C."/>
            <person name="Oliver K."/>
            <person name="O'Neil S."/>
            <person name="Pearson D."/>
            <person name="Quail M.A."/>
            <person name="Rabbinowitsch E."/>
            <person name="Rutherford K.M."/>
            <person name="Rutter S."/>
            <person name="Saunders D."/>
            <person name="Seeger K."/>
            <person name="Sharp S."/>
            <person name="Skelton J."/>
            <person name="Simmonds M.N."/>
            <person name="Squares R."/>
            <person name="Squares S."/>
            <person name="Stevens K."/>
            <person name="Taylor K."/>
            <person name="Taylor R.G."/>
            <person name="Tivey A."/>
            <person name="Walsh S.V."/>
            <person name="Warren T."/>
            <person name="Whitehead S."/>
            <person name="Woodward J.R."/>
            <person name="Volckaert G."/>
            <person name="Aert R."/>
            <person name="Robben J."/>
            <person name="Grymonprez B."/>
            <person name="Weltjens I."/>
            <person name="Vanstreels E."/>
            <person name="Rieger M."/>
            <person name="Schaefer M."/>
            <person name="Mueller-Auer S."/>
            <person name="Gabel C."/>
            <person name="Fuchs M."/>
            <person name="Duesterhoeft A."/>
            <person name="Fritzc C."/>
            <person name="Holzer E."/>
            <person name="Moestl D."/>
            <person name="Hilbert H."/>
            <person name="Borzym K."/>
            <person name="Langer I."/>
            <person name="Beck A."/>
            <person name="Lehrach H."/>
            <person name="Reinhardt R."/>
            <person name="Pohl T.M."/>
            <person name="Eger P."/>
            <person name="Zimmermann W."/>
            <person name="Wedler H."/>
            <person name="Wambutt R."/>
            <person name="Purnelle B."/>
            <person name="Goffeau A."/>
            <person name="Cadieu E."/>
            <person name="Dreano S."/>
            <person name="Gloux S."/>
            <person name="Lelaure V."/>
            <person name="Mottier S."/>
            <person name="Galibert F."/>
            <person name="Aves S.J."/>
            <person name="Xiang Z."/>
            <person name="Hunt C."/>
            <person name="Moore K."/>
            <person name="Hurst S.M."/>
            <person name="Lucas M."/>
            <person name="Rochet M."/>
            <person name="Gaillardin C."/>
            <person name="Tallada V.A."/>
            <person name="Garzon A."/>
            <person name="Thode G."/>
            <person name="Daga R.R."/>
            <person name="Cruzado L."/>
            <person name="Jimenez J."/>
            <person name="Sanchez M."/>
            <person name="del Rey F."/>
            <person name="Benito J."/>
            <person name="Dominguez A."/>
            <person name="Revuelta J.L."/>
            <person name="Moreno S."/>
            <person name="Armstrong J."/>
            <person name="Forsburg S.L."/>
            <person name="Cerutti L."/>
            <person name="Lowe T."/>
            <person name="McCombie W.R."/>
            <person name="Paulsen I."/>
            <person name="Potashkin J."/>
            <person name="Shpakovski G.V."/>
            <person name="Ussery D."/>
            <person name="Barrell B.G."/>
            <person name="Nurse P."/>
        </authorList>
    </citation>
    <scope>NUCLEOTIDE SEQUENCE [LARGE SCALE GENOMIC DNA]</scope>
    <source>
        <strain>972 / ATCC 24843</strain>
    </source>
</reference>
<reference key="4">
    <citation type="journal article" date="2002" name="Genes Cells">
        <title>Cut1/separase C-terminus affects spindle pole body positioning in interphase of fission yeast: pointed nuclear formation.</title>
        <authorList>
            <person name="Nakamura T."/>
            <person name="Nagao K."/>
            <person name="Nakaseko Y."/>
            <person name="Yanagida M."/>
        </authorList>
    </citation>
    <scope>FUNCTION</scope>
    <scope>MUTAGENESIS OF ASP-1767; GLU-1779 AND ALA-1816</scope>
</reference>
<accession>P18296</accession>
<accession>O94304</accession>